<organism>
    <name type="scientific">Yersinia pestis (strain Pestoides F)</name>
    <dbReference type="NCBI Taxonomy" id="386656"/>
    <lineage>
        <taxon>Bacteria</taxon>
        <taxon>Pseudomonadati</taxon>
        <taxon>Pseudomonadota</taxon>
        <taxon>Gammaproteobacteria</taxon>
        <taxon>Enterobacterales</taxon>
        <taxon>Yersiniaceae</taxon>
        <taxon>Yersinia</taxon>
    </lineage>
</organism>
<evidence type="ECO:0000255" key="1">
    <source>
        <dbReference type="HAMAP-Rule" id="MF_00428"/>
    </source>
</evidence>
<reference key="1">
    <citation type="submission" date="2007-02" db="EMBL/GenBank/DDBJ databases">
        <title>Complete sequence of chromosome of Yersinia pestis Pestoides F.</title>
        <authorList>
            <consortium name="US DOE Joint Genome Institute"/>
            <person name="Copeland A."/>
            <person name="Lucas S."/>
            <person name="Lapidus A."/>
            <person name="Barry K."/>
            <person name="Detter J.C."/>
            <person name="Glavina del Rio T."/>
            <person name="Hammon N."/>
            <person name="Israni S."/>
            <person name="Dalin E."/>
            <person name="Tice H."/>
            <person name="Pitluck S."/>
            <person name="Di Bartolo G."/>
            <person name="Chain P."/>
            <person name="Malfatti S."/>
            <person name="Shin M."/>
            <person name="Vergez L."/>
            <person name="Schmutz J."/>
            <person name="Larimer F."/>
            <person name="Land M."/>
            <person name="Hauser L."/>
            <person name="Worsham P."/>
            <person name="Chu M."/>
            <person name="Bearden S."/>
            <person name="Garcia E."/>
            <person name="Richardson P."/>
        </authorList>
    </citation>
    <scope>NUCLEOTIDE SEQUENCE [LARGE SCALE GENOMIC DNA]</scope>
    <source>
        <strain>Pestoides F</strain>
    </source>
</reference>
<sequence length="209" mass="22643">MADSKEIKRVLLSPLFDNNPIALQILGVCSALAVTTKLETALVMTLAVTLVTAFSSFFISLIRNHIPNSVRIIVQMVIIASLVIVVDQVLRAYAYEISKQLSVFVGLIITNCIVMGRAEAYAMKSPPIESFMDGIGNGLGYGVILVLVGFVRELVGSGKLFGVTVLETVQNGGWYLPNGLFLLAPSAFFIIGLLIWGLRTLKPAQIEKE</sequence>
<accession>A4TPL4</accession>
<proteinExistence type="inferred from homology"/>
<comment type="function">
    <text evidence="1">NQR complex catalyzes the reduction of ubiquinone-1 to ubiquinol by two successive reactions, coupled with the transport of Na(+) ions from the cytoplasm to the periplasm. NqrA to NqrE are probably involved in the second step, the conversion of ubisemiquinone to ubiquinol.</text>
</comment>
<comment type="catalytic activity">
    <reaction evidence="1">
        <text>a ubiquinone + n Na(+)(in) + NADH + H(+) = a ubiquinol + n Na(+)(out) + NAD(+)</text>
        <dbReference type="Rhea" id="RHEA:47748"/>
        <dbReference type="Rhea" id="RHEA-COMP:9565"/>
        <dbReference type="Rhea" id="RHEA-COMP:9566"/>
        <dbReference type="ChEBI" id="CHEBI:15378"/>
        <dbReference type="ChEBI" id="CHEBI:16389"/>
        <dbReference type="ChEBI" id="CHEBI:17976"/>
        <dbReference type="ChEBI" id="CHEBI:29101"/>
        <dbReference type="ChEBI" id="CHEBI:57540"/>
        <dbReference type="ChEBI" id="CHEBI:57945"/>
        <dbReference type="EC" id="7.2.1.1"/>
    </reaction>
</comment>
<comment type="subunit">
    <text evidence="1">Composed of six subunits; NqrA, NqrB, NqrC, NqrD, NqrE and NqrF.</text>
</comment>
<comment type="subcellular location">
    <subcellularLocation>
        <location evidence="1">Cell inner membrane</location>
        <topology evidence="1">Multi-pass membrane protein</topology>
    </subcellularLocation>
</comment>
<comment type="similarity">
    <text evidence="1">Belongs to the NqrDE/RnfAE family.</text>
</comment>
<protein>
    <recommendedName>
        <fullName evidence="1">Na(+)-translocating NADH-quinone reductase subunit D</fullName>
        <shortName evidence="1">Na(+)-NQR subunit D</shortName>
        <shortName evidence="1">Na(+)-translocating NQR subunit D</shortName>
        <ecNumber evidence="1">7.2.1.1</ecNumber>
    </recommendedName>
    <alternativeName>
        <fullName evidence="1">NQR complex subunit D</fullName>
    </alternativeName>
    <alternativeName>
        <fullName evidence="1">NQR-1 subunit D</fullName>
    </alternativeName>
</protein>
<dbReference type="EC" id="7.2.1.1" evidence="1"/>
<dbReference type="EMBL" id="CP000668">
    <property type="protein sequence ID" value="ABP41226.1"/>
    <property type="molecule type" value="Genomic_DNA"/>
</dbReference>
<dbReference type="RefSeq" id="WP_002208714.1">
    <property type="nucleotide sequence ID" value="NZ_CP009715.1"/>
</dbReference>
<dbReference type="SMR" id="A4TPL4"/>
<dbReference type="KEGG" id="ypp:YPDSF_2864"/>
<dbReference type="PATRIC" id="fig|386656.14.peg.128"/>
<dbReference type="GO" id="GO:0005886">
    <property type="term" value="C:plasma membrane"/>
    <property type="evidence" value="ECO:0007669"/>
    <property type="project" value="UniProtKB-SubCell"/>
</dbReference>
<dbReference type="GO" id="GO:0016655">
    <property type="term" value="F:oxidoreductase activity, acting on NAD(P)H, quinone or similar compound as acceptor"/>
    <property type="evidence" value="ECO:0007669"/>
    <property type="project" value="UniProtKB-UniRule"/>
</dbReference>
<dbReference type="GO" id="GO:0006814">
    <property type="term" value="P:sodium ion transport"/>
    <property type="evidence" value="ECO:0007669"/>
    <property type="project" value="UniProtKB-UniRule"/>
</dbReference>
<dbReference type="HAMAP" id="MF_00428">
    <property type="entry name" value="NqrD"/>
    <property type="match status" value="1"/>
</dbReference>
<dbReference type="InterPro" id="IPR011292">
    <property type="entry name" value="NqrD"/>
</dbReference>
<dbReference type="InterPro" id="IPR003667">
    <property type="entry name" value="NqrDE/RnfAE"/>
</dbReference>
<dbReference type="NCBIfam" id="TIGR01939">
    <property type="entry name" value="nqrD"/>
    <property type="match status" value="1"/>
</dbReference>
<dbReference type="NCBIfam" id="NF006777">
    <property type="entry name" value="PRK09292.1"/>
    <property type="match status" value="1"/>
</dbReference>
<dbReference type="NCBIfam" id="NF009070">
    <property type="entry name" value="PRK12405.1"/>
    <property type="match status" value="1"/>
</dbReference>
<dbReference type="PANTHER" id="PTHR30586">
    <property type="entry name" value="ELECTRON TRANSPORT COMPLEX PROTEIN RNFE"/>
    <property type="match status" value="1"/>
</dbReference>
<dbReference type="PANTHER" id="PTHR30586:SF1">
    <property type="entry name" value="NA(+)-TRANSLOCATING NADH-QUINONE REDUCTASE SUBUNIT D"/>
    <property type="match status" value="1"/>
</dbReference>
<dbReference type="Pfam" id="PF02508">
    <property type="entry name" value="Rnf-Nqr"/>
    <property type="match status" value="1"/>
</dbReference>
<dbReference type="PIRSF" id="PIRSF006102">
    <property type="entry name" value="NQR_DE"/>
    <property type="match status" value="1"/>
</dbReference>
<name>NQRD_YERPP</name>
<gene>
    <name evidence="1" type="primary">nqrD</name>
    <name type="ordered locus">YPDSF_2864</name>
</gene>
<keyword id="KW-0997">Cell inner membrane</keyword>
<keyword id="KW-1003">Cell membrane</keyword>
<keyword id="KW-0406">Ion transport</keyword>
<keyword id="KW-0472">Membrane</keyword>
<keyword id="KW-0520">NAD</keyword>
<keyword id="KW-0915">Sodium</keyword>
<keyword id="KW-0739">Sodium transport</keyword>
<keyword id="KW-1278">Translocase</keyword>
<keyword id="KW-0812">Transmembrane</keyword>
<keyword id="KW-1133">Transmembrane helix</keyword>
<keyword id="KW-0813">Transport</keyword>
<keyword id="KW-0830">Ubiquinone</keyword>
<feature type="chain" id="PRO_1000060181" description="Na(+)-translocating NADH-quinone reductase subunit D">
    <location>
        <begin position="1"/>
        <end position="209"/>
    </location>
</feature>
<feature type="transmembrane region" description="Helical" evidence="1">
    <location>
        <begin position="42"/>
        <end position="62"/>
    </location>
</feature>
<feature type="transmembrane region" description="Helical" evidence="1">
    <location>
        <begin position="66"/>
        <end position="86"/>
    </location>
</feature>
<feature type="transmembrane region" description="Helical" evidence="1">
    <location>
        <begin position="103"/>
        <end position="123"/>
    </location>
</feature>
<feature type="transmembrane region" description="Helical" evidence="1">
    <location>
        <begin position="131"/>
        <end position="151"/>
    </location>
</feature>
<feature type="transmembrane region" description="Helical" evidence="1">
    <location>
        <begin position="178"/>
        <end position="198"/>
    </location>
</feature>